<keyword id="KW-0067">ATP-binding</keyword>
<keyword id="KW-0143">Chaperone</keyword>
<keyword id="KW-0963">Cytoplasm</keyword>
<keyword id="KW-0413">Isomerase</keyword>
<keyword id="KW-0547">Nucleotide-binding</keyword>
<sequence length="549" mass="57348">MAAKDIRFGEDARSRMVRGVNVLANAVKATLGPKGRNVVLEKSFGAPTITKDGVSVAKEIELADKFENMGAQMVKEVASRTNDDAGDGTTTATVLAQALIREGAKAVAAGMNPMDLKRGIDKAVVAAVNELKSISKPTADDKAIAQVGTISANSDESIGQIIADAMKEVGKEGVITVEEGSGLDNELDVVKGMQFDRGYLSPYFINNQQSQTADLDDPFILLHDKKISNVRDLLPVLEGVAKAGKPLLIVAEEVEGEALATLVVNTIRGIVKVVAVKAPGFGDRRKAMLEDMAVLTGGTVISEEVGLSLEKATIKDLGRAKKVQVSKENTTIIDGVGDKAAVDSRVAQIKTQIQDTSSDYDREKLQERVAKLAGGVAVIKVGASTEIEMKEKKDRVDDALHATRAAVEEGVVPGGGVALVRAVSALAGLKGANEDQNHGIQIALRAMEAPLREIVANAGEEPSVIVNKVKEGTGSFGYNAATGEFGDMLQFGILDPTKVTRSALQNAASIAGLMITTEAMVAEAPKKDEPAMGGAGGMGGMGGMGGMDF</sequence>
<protein>
    <recommendedName>
        <fullName evidence="1">Chaperonin GroEL</fullName>
        <ecNumber evidence="1">5.6.1.7</ecNumber>
    </recommendedName>
    <alternativeName>
        <fullName evidence="1">60 kDa chaperonin</fullName>
    </alternativeName>
    <alternativeName>
        <fullName evidence="1">Chaperonin-60</fullName>
        <shortName evidence="1">Cpn60</shortName>
    </alternativeName>
</protein>
<dbReference type="EC" id="5.6.1.7" evidence="1"/>
<dbReference type="EMBL" id="CP001111">
    <property type="protein sequence ID" value="ACF53325.1"/>
    <property type="molecule type" value="Genomic_DNA"/>
</dbReference>
<dbReference type="RefSeq" id="WP_012512251.1">
    <property type="nucleotide sequence ID" value="NC_011071.1"/>
</dbReference>
<dbReference type="SMR" id="B4SKL8"/>
<dbReference type="STRING" id="391008.Smal_3626"/>
<dbReference type="KEGG" id="smt:Smal_3626"/>
<dbReference type="eggNOG" id="COG0459">
    <property type="taxonomic scope" value="Bacteria"/>
</dbReference>
<dbReference type="HOGENOM" id="CLU_016503_1_1_6"/>
<dbReference type="OrthoDB" id="9766614at2"/>
<dbReference type="Proteomes" id="UP000001867">
    <property type="component" value="Chromosome"/>
</dbReference>
<dbReference type="GO" id="GO:0005737">
    <property type="term" value="C:cytoplasm"/>
    <property type="evidence" value="ECO:0007669"/>
    <property type="project" value="UniProtKB-SubCell"/>
</dbReference>
<dbReference type="GO" id="GO:0005524">
    <property type="term" value="F:ATP binding"/>
    <property type="evidence" value="ECO:0007669"/>
    <property type="project" value="UniProtKB-UniRule"/>
</dbReference>
<dbReference type="GO" id="GO:0140662">
    <property type="term" value="F:ATP-dependent protein folding chaperone"/>
    <property type="evidence" value="ECO:0007669"/>
    <property type="project" value="InterPro"/>
</dbReference>
<dbReference type="GO" id="GO:0016853">
    <property type="term" value="F:isomerase activity"/>
    <property type="evidence" value="ECO:0007669"/>
    <property type="project" value="UniProtKB-KW"/>
</dbReference>
<dbReference type="GO" id="GO:0051082">
    <property type="term" value="F:unfolded protein binding"/>
    <property type="evidence" value="ECO:0007669"/>
    <property type="project" value="UniProtKB-UniRule"/>
</dbReference>
<dbReference type="GO" id="GO:0042026">
    <property type="term" value="P:protein refolding"/>
    <property type="evidence" value="ECO:0007669"/>
    <property type="project" value="UniProtKB-UniRule"/>
</dbReference>
<dbReference type="CDD" id="cd03344">
    <property type="entry name" value="GroEL"/>
    <property type="match status" value="1"/>
</dbReference>
<dbReference type="FunFam" id="1.10.560.10:FF:000001">
    <property type="entry name" value="60 kDa chaperonin"/>
    <property type="match status" value="1"/>
</dbReference>
<dbReference type="FunFam" id="3.50.7.10:FF:000001">
    <property type="entry name" value="60 kDa chaperonin"/>
    <property type="match status" value="1"/>
</dbReference>
<dbReference type="Gene3D" id="3.50.7.10">
    <property type="entry name" value="GroEL"/>
    <property type="match status" value="1"/>
</dbReference>
<dbReference type="Gene3D" id="1.10.560.10">
    <property type="entry name" value="GroEL-like equatorial domain"/>
    <property type="match status" value="1"/>
</dbReference>
<dbReference type="Gene3D" id="3.30.260.10">
    <property type="entry name" value="TCP-1-like chaperonin intermediate domain"/>
    <property type="match status" value="1"/>
</dbReference>
<dbReference type="HAMAP" id="MF_00600">
    <property type="entry name" value="CH60"/>
    <property type="match status" value="1"/>
</dbReference>
<dbReference type="InterPro" id="IPR018370">
    <property type="entry name" value="Chaperonin_Cpn60_CS"/>
</dbReference>
<dbReference type="InterPro" id="IPR001844">
    <property type="entry name" value="Cpn60/GroEL"/>
</dbReference>
<dbReference type="InterPro" id="IPR002423">
    <property type="entry name" value="Cpn60/GroEL/TCP-1"/>
</dbReference>
<dbReference type="InterPro" id="IPR027409">
    <property type="entry name" value="GroEL-like_apical_dom_sf"/>
</dbReference>
<dbReference type="InterPro" id="IPR027413">
    <property type="entry name" value="GROEL-like_equatorial_sf"/>
</dbReference>
<dbReference type="InterPro" id="IPR027410">
    <property type="entry name" value="TCP-1-like_intermed_sf"/>
</dbReference>
<dbReference type="NCBIfam" id="TIGR02348">
    <property type="entry name" value="GroEL"/>
    <property type="match status" value="1"/>
</dbReference>
<dbReference type="NCBIfam" id="NF000592">
    <property type="entry name" value="PRK00013.1"/>
    <property type="match status" value="1"/>
</dbReference>
<dbReference type="NCBIfam" id="NF009487">
    <property type="entry name" value="PRK12849.1"/>
    <property type="match status" value="1"/>
</dbReference>
<dbReference type="NCBIfam" id="NF009488">
    <property type="entry name" value="PRK12850.1"/>
    <property type="match status" value="1"/>
</dbReference>
<dbReference type="NCBIfam" id="NF009489">
    <property type="entry name" value="PRK12851.1"/>
    <property type="match status" value="1"/>
</dbReference>
<dbReference type="PANTHER" id="PTHR45633">
    <property type="entry name" value="60 KDA HEAT SHOCK PROTEIN, MITOCHONDRIAL"/>
    <property type="match status" value="1"/>
</dbReference>
<dbReference type="Pfam" id="PF00118">
    <property type="entry name" value="Cpn60_TCP1"/>
    <property type="match status" value="1"/>
</dbReference>
<dbReference type="PRINTS" id="PR00298">
    <property type="entry name" value="CHAPERONIN60"/>
</dbReference>
<dbReference type="SUPFAM" id="SSF52029">
    <property type="entry name" value="GroEL apical domain-like"/>
    <property type="match status" value="1"/>
</dbReference>
<dbReference type="SUPFAM" id="SSF48592">
    <property type="entry name" value="GroEL equatorial domain-like"/>
    <property type="match status" value="1"/>
</dbReference>
<dbReference type="SUPFAM" id="SSF54849">
    <property type="entry name" value="GroEL-intermediate domain like"/>
    <property type="match status" value="1"/>
</dbReference>
<dbReference type="PROSITE" id="PS00296">
    <property type="entry name" value="CHAPERONINS_CPN60"/>
    <property type="match status" value="1"/>
</dbReference>
<accession>B4SKL8</accession>
<name>CH60_STRM5</name>
<reference key="1">
    <citation type="submission" date="2008-06" db="EMBL/GenBank/DDBJ databases">
        <title>Complete sequence of Stenotrophomonas maltophilia R551-3.</title>
        <authorList>
            <consortium name="US DOE Joint Genome Institute"/>
            <person name="Lucas S."/>
            <person name="Copeland A."/>
            <person name="Lapidus A."/>
            <person name="Glavina del Rio T."/>
            <person name="Dalin E."/>
            <person name="Tice H."/>
            <person name="Pitluck S."/>
            <person name="Chain P."/>
            <person name="Malfatti S."/>
            <person name="Shin M."/>
            <person name="Vergez L."/>
            <person name="Lang D."/>
            <person name="Schmutz J."/>
            <person name="Larimer F."/>
            <person name="Land M."/>
            <person name="Hauser L."/>
            <person name="Kyrpides N."/>
            <person name="Mikhailova N."/>
            <person name="Taghavi S."/>
            <person name="Monchy S."/>
            <person name="Newman L."/>
            <person name="Vangronsveld J."/>
            <person name="van der Lelie D."/>
            <person name="Richardson P."/>
        </authorList>
    </citation>
    <scope>NUCLEOTIDE SEQUENCE [LARGE SCALE GENOMIC DNA]</scope>
    <source>
        <strain>R551-3</strain>
    </source>
</reference>
<organism>
    <name type="scientific">Stenotrophomonas maltophilia (strain R551-3)</name>
    <dbReference type="NCBI Taxonomy" id="391008"/>
    <lineage>
        <taxon>Bacteria</taxon>
        <taxon>Pseudomonadati</taxon>
        <taxon>Pseudomonadota</taxon>
        <taxon>Gammaproteobacteria</taxon>
        <taxon>Lysobacterales</taxon>
        <taxon>Lysobacteraceae</taxon>
        <taxon>Stenotrophomonas</taxon>
        <taxon>Stenotrophomonas maltophilia group</taxon>
    </lineage>
</organism>
<gene>
    <name evidence="1" type="primary">groEL</name>
    <name evidence="1" type="synonym">groL</name>
    <name type="ordered locus">Smal_3626</name>
</gene>
<feature type="chain" id="PRO_1000130062" description="Chaperonin GroEL">
    <location>
        <begin position="1"/>
        <end position="549"/>
    </location>
</feature>
<feature type="binding site" evidence="1">
    <location>
        <begin position="30"/>
        <end position="33"/>
    </location>
    <ligand>
        <name>ATP</name>
        <dbReference type="ChEBI" id="CHEBI:30616"/>
    </ligand>
</feature>
<feature type="binding site" evidence="1">
    <location>
        <position position="51"/>
    </location>
    <ligand>
        <name>ATP</name>
        <dbReference type="ChEBI" id="CHEBI:30616"/>
    </ligand>
</feature>
<feature type="binding site" evidence="1">
    <location>
        <begin position="87"/>
        <end position="91"/>
    </location>
    <ligand>
        <name>ATP</name>
        <dbReference type="ChEBI" id="CHEBI:30616"/>
    </ligand>
</feature>
<feature type="binding site" evidence="1">
    <location>
        <position position="415"/>
    </location>
    <ligand>
        <name>ATP</name>
        <dbReference type="ChEBI" id="CHEBI:30616"/>
    </ligand>
</feature>
<feature type="binding site" evidence="1">
    <location>
        <begin position="479"/>
        <end position="481"/>
    </location>
    <ligand>
        <name>ATP</name>
        <dbReference type="ChEBI" id="CHEBI:30616"/>
    </ligand>
</feature>
<feature type="binding site" evidence="1">
    <location>
        <position position="495"/>
    </location>
    <ligand>
        <name>ATP</name>
        <dbReference type="ChEBI" id="CHEBI:30616"/>
    </ligand>
</feature>
<proteinExistence type="inferred from homology"/>
<evidence type="ECO:0000255" key="1">
    <source>
        <dbReference type="HAMAP-Rule" id="MF_00600"/>
    </source>
</evidence>
<comment type="function">
    <text evidence="1">Together with its co-chaperonin GroES, plays an essential role in assisting protein folding. The GroEL-GroES system forms a nano-cage that allows encapsulation of the non-native substrate proteins and provides a physical environment optimized to promote and accelerate protein folding.</text>
</comment>
<comment type="catalytic activity">
    <reaction evidence="1">
        <text>ATP + H2O + a folded polypeptide = ADP + phosphate + an unfolded polypeptide.</text>
        <dbReference type="EC" id="5.6.1.7"/>
    </reaction>
</comment>
<comment type="subunit">
    <text evidence="1">Forms a cylinder of 14 subunits composed of two heptameric rings stacked back-to-back. Interacts with the co-chaperonin GroES.</text>
</comment>
<comment type="subcellular location">
    <subcellularLocation>
        <location evidence="1">Cytoplasm</location>
    </subcellularLocation>
</comment>
<comment type="similarity">
    <text evidence="1">Belongs to the chaperonin (HSP60) family.</text>
</comment>